<comment type="function">
    <text evidence="1">3'-to-5' exoribonuclease specific for small oligoribonucleotides.</text>
</comment>
<comment type="subcellular location">
    <subcellularLocation>
        <location evidence="1">Cytoplasm</location>
    </subcellularLocation>
</comment>
<comment type="similarity">
    <text evidence="1">Belongs to the oligoribonuclease family.</text>
</comment>
<protein>
    <recommendedName>
        <fullName evidence="1">Oligoribonuclease</fullName>
        <ecNumber evidence="1">3.1.15.-</ecNumber>
    </recommendedName>
</protein>
<reference key="1">
    <citation type="submission" date="2007-03" db="EMBL/GenBank/DDBJ databases">
        <title>Complete sequence of chromosome 1 of Burkholderia vietnamiensis G4.</title>
        <authorList>
            <consortium name="US DOE Joint Genome Institute"/>
            <person name="Copeland A."/>
            <person name="Lucas S."/>
            <person name="Lapidus A."/>
            <person name="Barry K."/>
            <person name="Detter J.C."/>
            <person name="Glavina del Rio T."/>
            <person name="Hammon N."/>
            <person name="Israni S."/>
            <person name="Dalin E."/>
            <person name="Tice H."/>
            <person name="Pitluck S."/>
            <person name="Chain P."/>
            <person name="Malfatti S."/>
            <person name="Shin M."/>
            <person name="Vergez L."/>
            <person name="Schmutz J."/>
            <person name="Larimer F."/>
            <person name="Land M."/>
            <person name="Hauser L."/>
            <person name="Kyrpides N."/>
            <person name="Tiedje J."/>
            <person name="Richardson P."/>
        </authorList>
    </citation>
    <scope>NUCLEOTIDE SEQUENCE [LARGE SCALE GENOMIC DNA]</scope>
    <source>
        <strain>G4 / LMG 22486</strain>
    </source>
</reference>
<feature type="chain" id="PRO_1000004241" description="Oligoribonuclease">
    <location>
        <begin position="1"/>
        <end position="200"/>
    </location>
</feature>
<feature type="domain" description="Exonuclease" evidence="1">
    <location>
        <begin position="20"/>
        <end position="183"/>
    </location>
</feature>
<feature type="active site" evidence="1">
    <location>
        <position position="141"/>
    </location>
</feature>
<proteinExistence type="inferred from homology"/>
<name>ORN_BURVG</name>
<accession>A4JCK6</accession>
<dbReference type="EC" id="3.1.15.-" evidence="1"/>
<dbReference type="EMBL" id="CP000614">
    <property type="protein sequence ID" value="ABO54009.1"/>
    <property type="molecule type" value="Genomic_DNA"/>
</dbReference>
<dbReference type="SMR" id="A4JCK6"/>
<dbReference type="KEGG" id="bvi:Bcep1808_0998"/>
<dbReference type="eggNOG" id="COG1949">
    <property type="taxonomic scope" value="Bacteria"/>
</dbReference>
<dbReference type="HOGENOM" id="CLU_064761_2_0_4"/>
<dbReference type="Proteomes" id="UP000002287">
    <property type="component" value="Chromosome 1"/>
</dbReference>
<dbReference type="GO" id="GO:0005737">
    <property type="term" value="C:cytoplasm"/>
    <property type="evidence" value="ECO:0007669"/>
    <property type="project" value="UniProtKB-SubCell"/>
</dbReference>
<dbReference type="GO" id="GO:0000175">
    <property type="term" value="F:3'-5'-RNA exonuclease activity"/>
    <property type="evidence" value="ECO:0007669"/>
    <property type="project" value="InterPro"/>
</dbReference>
<dbReference type="GO" id="GO:0003676">
    <property type="term" value="F:nucleic acid binding"/>
    <property type="evidence" value="ECO:0007669"/>
    <property type="project" value="InterPro"/>
</dbReference>
<dbReference type="GO" id="GO:0006259">
    <property type="term" value="P:DNA metabolic process"/>
    <property type="evidence" value="ECO:0007669"/>
    <property type="project" value="UniProtKB-ARBA"/>
</dbReference>
<dbReference type="CDD" id="cd06135">
    <property type="entry name" value="Orn"/>
    <property type="match status" value="1"/>
</dbReference>
<dbReference type="FunFam" id="3.30.420.10:FF:000003">
    <property type="entry name" value="Oligoribonuclease"/>
    <property type="match status" value="1"/>
</dbReference>
<dbReference type="Gene3D" id="3.30.420.10">
    <property type="entry name" value="Ribonuclease H-like superfamily/Ribonuclease H"/>
    <property type="match status" value="1"/>
</dbReference>
<dbReference type="HAMAP" id="MF_00045">
    <property type="entry name" value="Oligoribonuclease"/>
    <property type="match status" value="1"/>
</dbReference>
<dbReference type="InterPro" id="IPR013520">
    <property type="entry name" value="Exonuclease_RNaseT/DNA_pol3"/>
</dbReference>
<dbReference type="InterPro" id="IPR022894">
    <property type="entry name" value="Oligoribonuclease"/>
</dbReference>
<dbReference type="InterPro" id="IPR012337">
    <property type="entry name" value="RNaseH-like_sf"/>
</dbReference>
<dbReference type="InterPro" id="IPR036397">
    <property type="entry name" value="RNaseH_sf"/>
</dbReference>
<dbReference type="NCBIfam" id="NF003765">
    <property type="entry name" value="PRK05359.1"/>
    <property type="match status" value="1"/>
</dbReference>
<dbReference type="PANTHER" id="PTHR11046">
    <property type="entry name" value="OLIGORIBONUCLEASE, MITOCHONDRIAL"/>
    <property type="match status" value="1"/>
</dbReference>
<dbReference type="PANTHER" id="PTHR11046:SF0">
    <property type="entry name" value="OLIGORIBONUCLEASE, MITOCHONDRIAL"/>
    <property type="match status" value="1"/>
</dbReference>
<dbReference type="Pfam" id="PF00929">
    <property type="entry name" value="RNase_T"/>
    <property type="match status" value="1"/>
</dbReference>
<dbReference type="SMART" id="SM00479">
    <property type="entry name" value="EXOIII"/>
    <property type="match status" value="1"/>
</dbReference>
<dbReference type="SUPFAM" id="SSF53098">
    <property type="entry name" value="Ribonuclease H-like"/>
    <property type="match status" value="1"/>
</dbReference>
<keyword id="KW-0963">Cytoplasm</keyword>
<keyword id="KW-0269">Exonuclease</keyword>
<keyword id="KW-0378">Hydrolase</keyword>
<keyword id="KW-0540">Nuclease</keyword>
<sequence>MTDIAASASQPALVRNELNLVWLDMEMTGLDPDNDRIIEIAVVVTNSTLDIAVEGPVFAIHQSDETLAKMDDWNKSTHGRSGLIDRVRASTVTEAQAAAQLQAFLADYVSPGKSPMCGNSICQDRRFMARWMPEFERFFHYRNLDVSTLKELCRRWQPAIYKGFQKRAMHTALADIHESIDELKYYREHFLIPAAPASAA</sequence>
<gene>
    <name evidence="1" type="primary">orn</name>
    <name type="ordered locus">Bcep1808_0998</name>
</gene>
<organism>
    <name type="scientific">Burkholderia vietnamiensis (strain G4 / LMG 22486)</name>
    <name type="common">Burkholderia cepacia (strain R1808)</name>
    <dbReference type="NCBI Taxonomy" id="269482"/>
    <lineage>
        <taxon>Bacteria</taxon>
        <taxon>Pseudomonadati</taxon>
        <taxon>Pseudomonadota</taxon>
        <taxon>Betaproteobacteria</taxon>
        <taxon>Burkholderiales</taxon>
        <taxon>Burkholderiaceae</taxon>
        <taxon>Burkholderia</taxon>
        <taxon>Burkholderia cepacia complex</taxon>
    </lineage>
</organism>
<evidence type="ECO:0000255" key="1">
    <source>
        <dbReference type="HAMAP-Rule" id="MF_00045"/>
    </source>
</evidence>